<sequence length="388" mass="41052">MAYSARLRKAVGAVRATLSAVELCDVQAPEFAQHGDHAVAADAPLVLVACSGGRDSMALAAVSHIVCTSMGVRCGAVIVDHGLQEGSEQVAGEAANRCRALGLGPVIVRNATVQARGEGLEAAARQARYNELCAAARESGAIAVLLAHTMDDQAETVLIGLLRSRGVDALAGMPQVFTRSGVTFARPLLTLTRAETTGICEDLGVEYWDDPTNGDAVDGELPNDYPLRSRVRHDLLPAIERFAGFNVARHFAESARLARMDKEYLDQRSDEVMGEAVTTVDWPASSAAVSTDTPRACAAGDTNDSSHGVGLMISVRRIAREPEAIRLRVIAHALSQAGVNASAAQIAAIDRLVVDWHGQGGVSLPRGYSANRKKHVIRVCQDGAHANR</sequence>
<gene>
    <name evidence="1" type="primary">tilS</name>
    <name type="ordered locus">Blon_0547</name>
    <name type="ordered locus">BLIJ_0551</name>
</gene>
<protein>
    <recommendedName>
        <fullName evidence="1">tRNA(Ile)-lysidine synthase</fullName>
        <ecNumber evidence="1">6.3.4.19</ecNumber>
    </recommendedName>
    <alternativeName>
        <fullName evidence="1">tRNA(Ile)-2-lysyl-cytidine synthase</fullName>
    </alternativeName>
    <alternativeName>
        <fullName evidence="1">tRNA(Ile)-lysidine synthetase</fullName>
    </alternativeName>
</protein>
<feature type="chain" id="PRO_1000164317" description="tRNA(Ile)-lysidine synthase">
    <location>
        <begin position="1"/>
        <end position="388"/>
    </location>
</feature>
<feature type="binding site" evidence="1">
    <location>
        <begin position="51"/>
        <end position="56"/>
    </location>
    <ligand>
        <name>ATP</name>
        <dbReference type="ChEBI" id="CHEBI:30616"/>
    </ligand>
</feature>
<proteinExistence type="inferred from homology"/>
<comment type="function">
    <text evidence="1">Ligates lysine onto the cytidine present at position 34 of the AUA codon-specific tRNA(Ile) that contains the anticodon CAU, in an ATP-dependent manner. Cytidine is converted to lysidine, thus changing the amino acid specificity of the tRNA from methionine to isoleucine.</text>
</comment>
<comment type="catalytic activity">
    <reaction evidence="1">
        <text>cytidine(34) in tRNA(Ile2) + L-lysine + ATP = lysidine(34) in tRNA(Ile2) + AMP + diphosphate + H(+)</text>
        <dbReference type="Rhea" id="RHEA:43744"/>
        <dbReference type="Rhea" id="RHEA-COMP:10625"/>
        <dbReference type="Rhea" id="RHEA-COMP:10670"/>
        <dbReference type="ChEBI" id="CHEBI:15378"/>
        <dbReference type="ChEBI" id="CHEBI:30616"/>
        <dbReference type="ChEBI" id="CHEBI:32551"/>
        <dbReference type="ChEBI" id="CHEBI:33019"/>
        <dbReference type="ChEBI" id="CHEBI:82748"/>
        <dbReference type="ChEBI" id="CHEBI:83665"/>
        <dbReference type="ChEBI" id="CHEBI:456215"/>
        <dbReference type="EC" id="6.3.4.19"/>
    </reaction>
</comment>
<comment type="subcellular location">
    <subcellularLocation>
        <location evidence="1">Cytoplasm</location>
    </subcellularLocation>
</comment>
<comment type="domain">
    <text>The N-terminal region contains the highly conserved SGGXDS motif, predicted to be a P-loop motif involved in ATP binding.</text>
</comment>
<comment type="similarity">
    <text evidence="1">Belongs to the tRNA(Ile)-lysidine synthase family.</text>
</comment>
<dbReference type="EC" id="6.3.4.19" evidence="1"/>
<dbReference type="EMBL" id="CP001095">
    <property type="protein sequence ID" value="ACJ51660.1"/>
    <property type="molecule type" value="Genomic_DNA"/>
</dbReference>
<dbReference type="EMBL" id="AP010889">
    <property type="protein sequence ID" value="BAJ68145.1"/>
    <property type="molecule type" value="Genomic_DNA"/>
</dbReference>
<dbReference type="RefSeq" id="WP_012576954.1">
    <property type="nucleotide sequence ID" value="NZ_JDTT01000038.1"/>
</dbReference>
<dbReference type="SMR" id="B7GP48"/>
<dbReference type="KEGG" id="bln:Blon_0547"/>
<dbReference type="KEGG" id="blon:BLIJ_0551"/>
<dbReference type="PATRIC" id="fig|391904.8.peg.550"/>
<dbReference type="HOGENOM" id="CLU_018869_1_0_11"/>
<dbReference type="Proteomes" id="UP000001360">
    <property type="component" value="Chromosome"/>
</dbReference>
<dbReference type="GO" id="GO:0005737">
    <property type="term" value="C:cytoplasm"/>
    <property type="evidence" value="ECO:0007669"/>
    <property type="project" value="UniProtKB-SubCell"/>
</dbReference>
<dbReference type="GO" id="GO:0005524">
    <property type="term" value="F:ATP binding"/>
    <property type="evidence" value="ECO:0007669"/>
    <property type="project" value="UniProtKB-UniRule"/>
</dbReference>
<dbReference type="GO" id="GO:0032267">
    <property type="term" value="F:tRNA(Ile)-lysidine synthase activity"/>
    <property type="evidence" value="ECO:0007669"/>
    <property type="project" value="UniProtKB-EC"/>
</dbReference>
<dbReference type="GO" id="GO:0006400">
    <property type="term" value="P:tRNA modification"/>
    <property type="evidence" value="ECO:0007669"/>
    <property type="project" value="UniProtKB-UniRule"/>
</dbReference>
<dbReference type="CDD" id="cd01992">
    <property type="entry name" value="TilS_N"/>
    <property type="match status" value="1"/>
</dbReference>
<dbReference type="Gene3D" id="3.40.50.620">
    <property type="entry name" value="HUPs"/>
    <property type="match status" value="1"/>
</dbReference>
<dbReference type="HAMAP" id="MF_01161">
    <property type="entry name" value="tRNA_Ile_lys_synt"/>
    <property type="match status" value="1"/>
</dbReference>
<dbReference type="InterPro" id="IPR014729">
    <property type="entry name" value="Rossmann-like_a/b/a_fold"/>
</dbReference>
<dbReference type="InterPro" id="IPR011063">
    <property type="entry name" value="TilS/TtcA_N"/>
</dbReference>
<dbReference type="InterPro" id="IPR012094">
    <property type="entry name" value="tRNA_Ile_lys_synt"/>
</dbReference>
<dbReference type="InterPro" id="IPR012795">
    <property type="entry name" value="tRNA_Ile_lys_synt_N"/>
</dbReference>
<dbReference type="InterPro" id="IPR015262">
    <property type="entry name" value="tRNA_Ile_lys_synt_subst-bd"/>
</dbReference>
<dbReference type="NCBIfam" id="TIGR02432">
    <property type="entry name" value="lysidine_TilS_N"/>
    <property type="match status" value="1"/>
</dbReference>
<dbReference type="PANTHER" id="PTHR43033">
    <property type="entry name" value="TRNA(ILE)-LYSIDINE SYNTHASE-RELATED"/>
    <property type="match status" value="1"/>
</dbReference>
<dbReference type="PANTHER" id="PTHR43033:SF1">
    <property type="entry name" value="TRNA(ILE)-LYSIDINE SYNTHASE-RELATED"/>
    <property type="match status" value="1"/>
</dbReference>
<dbReference type="Pfam" id="PF01171">
    <property type="entry name" value="ATP_bind_3"/>
    <property type="match status" value="1"/>
</dbReference>
<dbReference type="Pfam" id="PF09179">
    <property type="entry name" value="TilS"/>
    <property type="match status" value="1"/>
</dbReference>
<dbReference type="SUPFAM" id="SSF52402">
    <property type="entry name" value="Adenine nucleotide alpha hydrolases-like"/>
    <property type="match status" value="1"/>
</dbReference>
<dbReference type="SUPFAM" id="SSF82829">
    <property type="entry name" value="MesJ substrate recognition domain-like"/>
    <property type="match status" value="1"/>
</dbReference>
<keyword id="KW-0067">ATP-binding</keyword>
<keyword id="KW-0963">Cytoplasm</keyword>
<keyword id="KW-0436">Ligase</keyword>
<keyword id="KW-0547">Nucleotide-binding</keyword>
<keyword id="KW-0819">tRNA processing</keyword>
<accession>B7GP48</accession>
<accession>E8MQ70</accession>
<name>TILS_BIFLS</name>
<evidence type="ECO:0000255" key="1">
    <source>
        <dbReference type="HAMAP-Rule" id="MF_01161"/>
    </source>
</evidence>
<organism>
    <name type="scientific">Bifidobacterium longum subsp. infantis (strain ATCC 15697 / DSM 20088 / JCM 1222 / NCTC 11817 / S12)</name>
    <dbReference type="NCBI Taxonomy" id="391904"/>
    <lineage>
        <taxon>Bacteria</taxon>
        <taxon>Bacillati</taxon>
        <taxon>Actinomycetota</taxon>
        <taxon>Actinomycetes</taxon>
        <taxon>Bifidobacteriales</taxon>
        <taxon>Bifidobacteriaceae</taxon>
        <taxon>Bifidobacterium</taxon>
    </lineage>
</organism>
<reference key="1">
    <citation type="journal article" date="2008" name="Proc. Natl. Acad. Sci. U.S.A.">
        <title>The genome sequence of Bifidobacterium longum subsp. infantis reveals adaptations for milk utilization within the infant microbiome.</title>
        <authorList>
            <person name="Sela D.A."/>
            <person name="Chapman J."/>
            <person name="Adeuya A."/>
            <person name="Kim J.H."/>
            <person name="Chen F."/>
            <person name="Whitehead T.R."/>
            <person name="Lapidus A."/>
            <person name="Rokhsar D.S."/>
            <person name="Lebrilla C.B."/>
            <person name="German J.B."/>
            <person name="Price N.P."/>
            <person name="Richardson P.M."/>
            <person name="Mills D.A."/>
        </authorList>
    </citation>
    <scope>NUCLEOTIDE SEQUENCE [LARGE SCALE GENOMIC DNA]</scope>
    <source>
        <strain>ATCC 15697 / DSM 20088 / JCM 1222 / NCTC 11817 / S12</strain>
    </source>
</reference>
<reference key="2">
    <citation type="journal article" date="2011" name="Nature">
        <title>Bifidobacteria can protect from enteropathogenic infection through production of acetate.</title>
        <authorList>
            <person name="Fukuda S."/>
            <person name="Toh H."/>
            <person name="Hase K."/>
            <person name="Oshima K."/>
            <person name="Nakanishi Y."/>
            <person name="Yoshimura K."/>
            <person name="Tobe T."/>
            <person name="Clarke J.M."/>
            <person name="Topping D.L."/>
            <person name="Suzuki T."/>
            <person name="Taylor T.D."/>
            <person name="Itoh K."/>
            <person name="Kikuchi J."/>
            <person name="Morita H."/>
            <person name="Hattori M."/>
            <person name="Ohno H."/>
        </authorList>
    </citation>
    <scope>NUCLEOTIDE SEQUENCE [LARGE SCALE GENOMIC DNA]</scope>
    <source>
        <strain>ATCC 15697 / DSM 20088 / JCM 1222 / NCTC 11817 / S12</strain>
    </source>
</reference>